<dbReference type="EC" id="3.5.4.28"/>
<dbReference type="EC" id="3.5.4.31"/>
<dbReference type="EMBL" id="AE000512">
    <property type="protein sequence ID" value="AAD36017.1"/>
    <property type="molecule type" value="Genomic_DNA"/>
</dbReference>
<dbReference type="PIR" id="H72315">
    <property type="entry name" value="H72315"/>
</dbReference>
<dbReference type="RefSeq" id="NP_228744.1">
    <property type="nucleotide sequence ID" value="NC_000853.1"/>
</dbReference>
<dbReference type="RefSeq" id="WP_004080626.1">
    <property type="nucleotide sequence ID" value="NC_000853.1"/>
</dbReference>
<dbReference type="PDB" id="1J6P">
    <property type="method" value="X-ray"/>
    <property type="resolution" value="1.90 A"/>
    <property type="chains" value="A=1-406"/>
</dbReference>
<dbReference type="PDB" id="1P1M">
    <property type="method" value="X-ray"/>
    <property type="resolution" value="1.50 A"/>
    <property type="chains" value="A=1-406"/>
</dbReference>
<dbReference type="PDB" id="2PLM">
    <property type="method" value="X-ray"/>
    <property type="resolution" value="2.10 A"/>
    <property type="chains" value="A=1-406"/>
</dbReference>
<dbReference type="PDBsum" id="1J6P"/>
<dbReference type="PDBsum" id="1P1M"/>
<dbReference type="PDBsum" id="2PLM"/>
<dbReference type="SMR" id="Q9X034"/>
<dbReference type="STRING" id="243274.TM_0936"/>
<dbReference type="ChEMBL" id="CHEMBL1075031"/>
<dbReference type="PaxDb" id="243274-THEMA_09670"/>
<dbReference type="EnsemblBacteria" id="AAD36017">
    <property type="protein sequence ID" value="AAD36017"/>
    <property type="gene ID" value="TM_0936"/>
</dbReference>
<dbReference type="KEGG" id="tma:TM0936"/>
<dbReference type="KEGG" id="tmi:THEMA_09670"/>
<dbReference type="KEGG" id="tmm:Tmari_0938"/>
<dbReference type="KEGG" id="tmw:THMA_0958"/>
<dbReference type="eggNOG" id="COG0402">
    <property type="taxonomic scope" value="Bacteria"/>
</dbReference>
<dbReference type="InParanoid" id="Q9X034"/>
<dbReference type="OrthoDB" id="9807210at2"/>
<dbReference type="BioCyc" id="MetaCyc:MONOMER-16147"/>
<dbReference type="BRENDA" id="3.5.4.31">
    <property type="organism ID" value="6331"/>
</dbReference>
<dbReference type="SABIO-RK" id="Q9X034"/>
<dbReference type="EvolutionaryTrace" id="Q9X034"/>
<dbReference type="PRO" id="PR:Q9X034"/>
<dbReference type="Proteomes" id="UP000008183">
    <property type="component" value="Chromosome"/>
</dbReference>
<dbReference type="GO" id="GO:0090614">
    <property type="term" value="F:5'-methylthioadenosine deaminase activity"/>
    <property type="evidence" value="ECO:0007669"/>
    <property type="project" value="UniProtKB-UniRule"/>
</dbReference>
<dbReference type="GO" id="GO:0046872">
    <property type="term" value="F:metal ion binding"/>
    <property type="evidence" value="ECO:0007669"/>
    <property type="project" value="UniProtKB-KW"/>
</dbReference>
<dbReference type="GO" id="GO:0050270">
    <property type="term" value="F:S-adenosylhomocysteine deaminase activity"/>
    <property type="evidence" value="ECO:0000314"/>
    <property type="project" value="CACAO"/>
</dbReference>
<dbReference type="CDD" id="cd01298">
    <property type="entry name" value="ATZ_TRZ_like"/>
    <property type="match status" value="1"/>
</dbReference>
<dbReference type="FunFam" id="3.20.20.140:FF:000014">
    <property type="entry name" value="5-methylthioadenosine/S-adenosylhomocysteine deaminase"/>
    <property type="match status" value="1"/>
</dbReference>
<dbReference type="Gene3D" id="3.20.20.140">
    <property type="entry name" value="Metal-dependent hydrolases"/>
    <property type="match status" value="1"/>
</dbReference>
<dbReference type="Gene3D" id="2.30.40.10">
    <property type="entry name" value="Urease, subunit C, domain 1"/>
    <property type="match status" value="1"/>
</dbReference>
<dbReference type="HAMAP" id="MF_01281">
    <property type="entry name" value="MTA_SAH_deamin"/>
    <property type="match status" value="1"/>
</dbReference>
<dbReference type="InterPro" id="IPR006680">
    <property type="entry name" value="Amidohydro-rel"/>
</dbReference>
<dbReference type="InterPro" id="IPR023512">
    <property type="entry name" value="Deaminase_MtaD/DadD"/>
</dbReference>
<dbReference type="InterPro" id="IPR011059">
    <property type="entry name" value="Metal-dep_hydrolase_composite"/>
</dbReference>
<dbReference type="InterPro" id="IPR032466">
    <property type="entry name" value="Metal_Hydrolase"/>
</dbReference>
<dbReference type="InterPro" id="IPR050287">
    <property type="entry name" value="MTA/SAH_deaminase"/>
</dbReference>
<dbReference type="PANTHER" id="PTHR43794:SF11">
    <property type="entry name" value="AMIDOHYDROLASE-RELATED DOMAIN-CONTAINING PROTEIN"/>
    <property type="match status" value="1"/>
</dbReference>
<dbReference type="PANTHER" id="PTHR43794">
    <property type="entry name" value="AMINOHYDROLASE SSNA-RELATED"/>
    <property type="match status" value="1"/>
</dbReference>
<dbReference type="Pfam" id="PF01979">
    <property type="entry name" value="Amidohydro_1"/>
    <property type="match status" value="1"/>
</dbReference>
<dbReference type="SUPFAM" id="SSF51338">
    <property type="entry name" value="Composite domain of metallo-dependent hydrolases"/>
    <property type="match status" value="1"/>
</dbReference>
<dbReference type="SUPFAM" id="SSF51556">
    <property type="entry name" value="Metallo-dependent hydrolases"/>
    <property type="match status" value="1"/>
</dbReference>
<protein>
    <recommendedName>
        <fullName>5-methylthioadenosine/S-adenosylhomocysteine deaminase</fullName>
        <shortName>MTA/SAH deaminase</shortName>
        <ecNumber>3.5.4.28</ecNumber>
        <ecNumber>3.5.4.31</ecNumber>
    </recommendedName>
</protein>
<comment type="function">
    <text evidence="1">Catalyzes the deamination of 5-methylthioadenosine and S-adenosyl-L-homocysteine into 5-methylthioinosine and S-inosyl-L-homocysteine, respectively. Is also able to deaminate adenosine. Adenosine-5-monophosphate (AMP) and S-adenosyl-L-methionine (SAM) are not enzyme substrates.</text>
</comment>
<comment type="catalytic activity">
    <reaction evidence="1">
        <text>S-adenosyl-L-homocysteine + H2O + H(+) = S-inosyl-L-homocysteine + NH4(+)</text>
        <dbReference type="Rhea" id="RHEA:20716"/>
        <dbReference type="ChEBI" id="CHEBI:15377"/>
        <dbReference type="ChEBI" id="CHEBI:15378"/>
        <dbReference type="ChEBI" id="CHEBI:28938"/>
        <dbReference type="ChEBI" id="CHEBI:57856"/>
        <dbReference type="ChEBI" id="CHEBI:57985"/>
        <dbReference type="EC" id="3.5.4.28"/>
    </reaction>
</comment>
<comment type="catalytic activity">
    <reaction evidence="1">
        <text>S-methyl-5'-thioadenosine + H2O + H(+) = S-methyl-5'-thioinosine + NH4(+)</text>
        <dbReference type="Rhea" id="RHEA:25025"/>
        <dbReference type="ChEBI" id="CHEBI:15377"/>
        <dbReference type="ChEBI" id="CHEBI:15378"/>
        <dbReference type="ChEBI" id="CHEBI:17509"/>
        <dbReference type="ChEBI" id="CHEBI:28938"/>
        <dbReference type="ChEBI" id="CHEBI:48595"/>
        <dbReference type="EC" id="3.5.4.31"/>
    </reaction>
</comment>
<comment type="cofactor">
    <cofactor evidence="1">
        <name>Zn(2+)</name>
        <dbReference type="ChEBI" id="CHEBI:29105"/>
    </cofactor>
    <text evidence="1">Binds 1 zinc ion per subunit.</text>
</comment>
<comment type="biophysicochemical properties">
    <kinetics>
        <KM evidence="1">210 uM for S-adenosyl-L-homocysteine</KM>
        <KM evidence="1">44 uM for 5-methyl-thioadenosine</KM>
        <KM evidence="1">250 uM for adenosine</KM>
    </kinetics>
</comment>
<comment type="similarity">
    <text evidence="2">Belongs to the metallo-dependent hydrolases superfamily. MTA/SAH deaminase family.</text>
</comment>
<proteinExistence type="evidence at protein level"/>
<feature type="chain" id="PRO_0000312465" description="5-methylthioadenosine/S-adenosylhomocysteine deaminase">
    <location>
        <begin position="1"/>
        <end position="406"/>
    </location>
</feature>
<feature type="binding site">
    <location>
        <position position="55"/>
    </location>
    <ligand>
        <name>Zn(2+)</name>
        <dbReference type="ChEBI" id="CHEBI:29105"/>
    </ligand>
</feature>
<feature type="binding site">
    <location>
        <position position="57"/>
    </location>
    <ligand>
        <name>Zn(2+)</name>
        <dbReference type="ChEBI" id="CHEBI:29105"/>
    </ligand>
</feature>
<feature type="binding site">
    <location>
        <position position="84"/>
    </location>
    <ligand>
        <name>substrate</name>
    </ligand>
</feature>
<feature type="binding site">
    <location>
        <position position="136"/>
    </location>
    <ligand>
        <name>substrate</name>
    </ligand>
</feature>
<feature type="binding site">
    <location>
        <position position="148"/>
    </location>
    <ligand>
        <name>substrate</name>
    </ligand>
</feature>
<feature type="binding site">
    <location>
        <position position="173"/>
    </location>
    <ligand>
        <name>substrate</name>
    </ligand>
</feature>
<feature type="binding site">
    <location>
        <position position="200"/>
    </location>
    <ligand>
        <name>Zn(2+)</name>
        <dbReference type="ChEBI" id="CHEBI:29105"/>
    </ligand>
</feature>
<feature type="binding site">
    <location>
        <position position="203"/>
    </location>
    <ligand>
        <name>substrate</name>
    </ligand>
</feature>
<feature type="binding site">
    <location>
        <position position="279"/>
    </location>
    <ligand>
        <name>substrate</name>
    </ligand>
</feature>
<feature type="binding site">
    <location>
        <position position="279"/>
    </location>
    <ligand>
        <name>Zn(2+)</name>
        <dbReference type="ChEBI" id="CHEBI:29105"/>
    </ligand>
</feature>
<feature type="strand" evidence="3">
    <location>
        <begin position="2"/>
        <end position="8"/>
    </location>
</feature>
<feature type="strand" evidence="3">
    <location>
        <begin position="17"/>
        <end position="24"/>
    </location>
</feature>
<feature type="strand" evidence="3">
    <location>
        <begin position="27"/>
        <end position="35"/>
    </location>
</feature>
<feature type="strand" evidence="3">
    <location>
        <begin position="39"/>
        <end position="41"/>
    </location>
</feature>
<feature type="strand" evidence="3">
    <location>
        <begin position="45"/>
        <end position="49"/>
    </location>
</feature>
<feature type="strand" evidence="3">
    <location>
        <begin position="51"/>
        <end position="56"/>
    </location>
</feature>
<feature type="helix" evidence="3">
    <location>
        <begin position="58"/>
        <end position="63"/>
    </location>
</feature>
<feature type="helix" evidence="3">
    <location>
        <begin position="72"/>
        <end position="77"/>
    </location>
</feature>
<feature type="helix" evidence="3">
    <location>
        <begin position="80"/>
        <end position="84"/>
    </location>
</feature>
<feature type="helix" evidence="3">
    <location>
        <begin position="89"/>
        <end position="104"/>
    </location>
</feature>
<feature type="turn" evidence="3">
    <location>
        <begin position="105"/>
        <end position="107"/>
    </location>
</feature>
<feature type="strand" evidence="3">
    <location>
        <begin position="108"/>
        <end position="117"/>
    </location>
</feature>
<feature type="helix" evidence="3">
    <location>
        <begin position="118"/>
        <end position="128"/>
    </location>
</feature>
<feature type="strand" evidence="3">
    <location>
        <begin position="131"/>
        <end position="138"/>
    </location>
</feature>
<feature type="helix" evidence="3">
    <location>
        <begin position="148"/>
        <end position="159"/>
    </location>
</feature>
<feature type="helix" evidence="3">
    <location>
        <begin position="162"/>
        <end position="164"/>
    </location>
</feature>
<feature type="strand" evidence="3">
    <location>
        <begin position="166"/>
        <end position="172"/>
    </location>
</feature>
<feature type="turn" evidence="3">
    <location>
        <begin position="175"/>
        <end position="177"/>
    </location>
</feature>
<feature type="helix" evidence="3">
    <location>
        <begin position="180"/>
        <end position="192"/>
    </location>
</feature>
<feature type="strand" evidence="3">
    <location>
        <begin position="197"/>
        <end position="202"/>
    </location>
</feature>
<feature type="helix" evidence="3">
    <location>
        <begin position="212"/>
        <end position="215"/>
    </location>
</feature>
<feature type="turn" evidence="3">
    <location>
        <begin position="216"/>
        <end position="221"/>
    </location>
</feature>
<feature type="strand" evidence="3">
    <location>
        <begin position="224"/>
        <end position="228"/>
    </location>
</feature>
<feature type="helix" evidence="3">
    <location>
        <begin position="234"/>
        <end position="236"/>
    </location>
</feature>
<feature type="turn" evidence="3">
    <location>
        <begin position="237"/>
        <end position="242"/>
    </location>
</feature>
<feature type="strand" evidence="3">
    <location>
        <begin position="243"/>
        <end position="249"/>
    </location>
</feature>
<feature type="helix" evidence="3">
    <location>
        <begin position="251"/>
        <end position="256"/>
    </location>
</feature>
<feature type="helix" evidence="3">
    <location>
        <begin position="264"/>
        <end position="269"/>
    </location>
</feature>
<feature type="strand" evidence="3">
    <location>
        <begin position="273"/>
        <end position="276"/>
    </location>
</feature>
<feature type="turn" evidence="3">
    <location>
        <begin position="281"/>
        <end position="284"/>
    </location>
</feature>
<feature type="helix" evidence="3">
    <location>
        <begin position="289"/>
        <end position="301"/>
    </location>
</feature>
<feature type="helix" evidence="3">
    <location>
        <begin position="310"/>
        <end position="317"/>
    </location>
</feature>
<feature type="helix" evidence="3">
    <location>
        <begin position="319"/>
        <end position="325"/>
    </location>
</feature>
<feature type="strand" evidence="3">
    <location>
        <begin position="340"/>
        <end position="344"/>
    </location>
</feature>
<feature type="helix" evidence="3">
    <location>
        <begin position="348"/>
        <end position="350"/>
    </location>
</feature>
<feature type="helix" evidence="3">
    <location>
        <begin position="353"/>
        <end position="355"/>
    </location>
</feature>
<feature type="helix" evidence="3">
    <location>
        <begin position="356"/>
        <end position="362"/>
    </location>
</feature>
<feature type="strand" evidence="3">
    <location>
        <begin position="369"/>
        <end position="373"/>
    </location>
</feature>
<feature type="strand" evidence="3">
    <location>
        <begin position="376"/>
        <end position="380"/>
    </location>
</feature>
<feature type="helix" evidence="3">
    <location>
        <begin position="389"/>
        <end position="403"/>
    </location>
</feature>
<gene>
    <name type="primary">mtaD</name>
    <name type="ordered locus">TM_0936</name>
</gene>
<sequence>MIIGNCLILKDFSSEPFWGAVEIENGTIKRVLQGEVKVDLDLSGKLVMPALFNTHTHAPMTLLRGVAEDLSFEEWLFSKVLPIEDRLTEKMAYYGTILAQMEMARHGIAGFVDMYFHEEWIAKAVRDFGMRALLTRGLVDSNGDDGGRLEENLKLYNEWNGFEGRIFVGFGPHSPYLCSEEYLKRVFDTAKSLNAPVTIHLYETSKEEYDLEDILNIGLKEVKTIAAHCVHLPERYFGVLKDIPFFVSHNPASNLKLGNGIAPVQRMIEHGMKVTLGTDGAASNNSLNLFFEMRLASLLQKAQNPRNLDVNTCLKMVTYDGAQAMGFKSGKIEEGWNADLVVIDLDLPEMFPVQNIKNHLVHAFSGEVFATMVAGKWIYFDGEYPTIDSEEVKRELARIEKELYSS</sequence>
<organism>
    <name type="scientific">Thermotoga maritima (strain ATCC 43589 / DSM 3109 / JCM 10099 / NBRC 100826 / MSB8)</name>
    <dbReference type="NCBI Taxonomy" id="243274"/>
    <lineage>
        <taxon>Bacteria</taxon>
        <taxon>Thermotogati</taxon>
        <taxon>Thermotogota</taxon>
        <taxon>Thermotogae</taxon>
        <taxon>Thermotogales</taxon>
        <taxon>Thermotogaceae</taxon>
        <taxon>Thermotoga</taxon>
    </lineage>
</organism>
<keyword id="KW-0002">3D-structure</keyword>
<keyword id="KW-0903">Direct protein sequencing</keyword>
<keyword id="KW-0378">Hydrolase</keyword>
<keyword id="KW-0479">Metal-binding</keyword>
<keyword id="KW-1185">Reference proteome</keyword>
<keyword id="KW-0862">Zinc</keyword>
<reference key="1">
    <citation type="journal article" date="1999" name="Nature">
        <title>Evidence for lateral gene transfer between Archaea and Bacteria from genome sequence of Thermotoga maritima.</title>
        <authorList>
            <person name="Nelson K.E."/>
            <person name="Clayton R.A."/>
            <person name="Gill S.R."/>
            <person name="Gwinn M.L."/>
            <person name="Dodson R.J."/>
            <person name="Haft D.H."/>
            <person name="Hickey E.K."/>
            <person name="Peterson J.D."/>
            <person name="Nelson W.C."/>
            <person name="Ketchum K.A."/>
            <person name="McDonald L.A."/>
            <person name="Utterback T.R."/>
            <person name="Malek J.A."/>
            <person name="Linher K.D."/>
            <person name="Garrett M.M."/>
            <person name="Stewart A.M."/>
            <person name="Cotton M.D."/>
            <person name="Pratt M.S."/>
            <person name="Phillips C.A."/>
            <person name="Richardson D.L."/>
            <person name="Heidelberg J.F."/>
            <person name="Sutton G.G."/>
            <person name="Fleischmann R.D."/>
            <person name="Eisen J.A."/>
            <person name="White O."/>
            <person name="Salzberg S.L."/>
            <person name="Smith H.O."/>
            <person name="Venter J.C."/>
            <person name="Fraser C.M."/>
        </authorList>
    </citation>
    <scope>NUCLEOTIDE SEQUENCE [LARGE SCALE GENOMIC DNA]</scope>
    <source>
        <strain>ATCC 43589 / DSM 3109 / JCM 10099 / NBRC 100826 / MSB8</strain>
    </source>
</reference>
<reference key="2">
    <citation type="journal article" date="2007" name="Nature">
        <title>Structure-based activity prediction for an enzyme of unknown function.</title>
        <authorList>
            <person name="Hermann J.C."/>
            <person name="Marti-Arbona R."/>
            <person name="Fedorov A.A."/>
            <person name="Fedorov E."/>
            <person name="Almo S.C."/>
            <person name="Shoichet B.K."/>
            <person name="Raushel F.M."/>
        </authorList>
    </citation>
    <scope>PROTEIN SEQUENCE OF 1-5</scope>
    <scope>X-RAY CRYSTALLOGRAPHY (2.1 ANGSTROMS) IN COMPLEX WITH ZINC ION AND PRODUCT</scope>
    <scope>FUNCTION</scope>
    <scope>CATALYTIC ACTIVITY</scope>
    <scope>SUBSTRATE SPECIFICITY</scope>
    <scope>COFACTOR</scope>
    <scope>BIOPHYSICOCHEMICAL PROPERTIES</scope>
    <scope>REACTION MECHANISM</scope>
    <source>
        <strain>ATCC 43589 / DSM 3109 / JCM 10099 / NBRC 100826 / MSB8</strain>
    </source>
</reference>
<reference key="3">
    <citation type="submission" date="2005-01" db="PDB data bank">
        <title>Structure of the hypothetical protein TM0936 from Thermotoga maritima at 1.5 A bound to Ni and methionine.</title>
        <authorList>
            <consortium name="New York structural genomics research consortium (NYSGRC)"/>
        </authorList>
    </citation>
    <scope>X-RAY CRYSTALLOGRAPHY (1.5 ANGSTROMS) IN COMPLEX WITH NICKEL ION AND METHIONINE</scope>
</reference>
<reference key="4">
    <citation type="submission" date="2006-03" db="PDB data bank">
        <title>Crystal structure of metal-dependent hydrolase of cytosinedemaniase/chlorohydrolase family (TM0936) from Thermotoga maritima at 1.9 A resolution.</title>
        <authorList>
            <consortium name="Joint center for structural genomics (JCSG)"/>
        </authorList>
    </citation>
    <scope>X-RAY CRYSTALLOGRAPHY (1.9 ANGSTROMS) IN COMPLEX WITH NICKEL ION</scope>
</reference>
<evidence type="ECO:0000269" key="1">
    <source>
    </source>
</evidence>
<evidence type="ECO:0000305" key="2"/>
<evidence type="ECO:0007829" key="3">
    <source>
        <dbReference type="PDB" id="1P1M"/>
    </source>
</evidence>
<name>MTAD_THEMA</name>
<accession>Q9X034</accession>